<feature type="chain" id="PRO_0000244852" description="Protein Tat">
    <location>
        <begin position="1"/>
        <end position="99"/>
    </location>
</feature>
<feature type="region of interest" description="Transactivation" evidence="1">
    <location>
        <begin position="1"/>
        <end position="48"/>
    </location>
</feature>
<feature type="region of interest" description="Interaction with human CREBBP" evidence="1">
    <location>
        <begin position="1"/>
        <end position="24"/>
    </location>
</feature>
<feature type="region of interest" description="Cysteine-rich" evidence="1">
    <location>
        <begin position="22"/>
        <end position="37"/>
    </location>
</feature>
<feature type="region of interest" description="Core" evidence="1">
    <location>
        <begin position="38"/>
        <end position="48"/>
    </location>
</feature>
<feature type="region of interest" description="Disordered" evidence="2">
    <location>
        <begin position="47"/>
        <end position="99"/>
    </location>
</feature>
<feature type="region of interest" description="Interaction with the host capping enzyme RNGTT" evidence="1">
    <location>
        <begin position="49"/>
        <end position="86"/>
    </location>
</feature>
<feature type="short sequence motif" description="Nuclear localization signal, RNA-binding (TAR), and protein transduction" evidence="1">
    <location>
        <begin position="49"/>
        <end position="57"/>
    </location>
</feature>
<feature type="short sequence motif" description="Cell attachment site" evidence="1">
    <location>
        <begin position="78"/>
        <end position="80"/>
    </location>
</feature>
<feature type="compositionally biased region" description="Basic residues" evidence="2">
    <location>
        <begin position="48"/>
        <end position="58"/>
    </location>
</feature>
<feature type="binding site" evidence="1">
    <location>
        <position position="22"/>
    </location>
    <ligand>
        <name>Zn(2+)</name>
        <dbReference type="ChEBI" id="CHEBI:29105"/>
        <label>1</label>
    </ligand>
</feature>
<feature type="binding site" evidence="1">
    <location>
        <position position="25"/>
    </location>
    <ligand>
        <name>Zn(2+)</name>
        <dbReference type="ChEBI" id="CHEBI:29105"/>
        <label>2</label>
    </ligand>
</feature>
<feature type="binding site" evidence="1">
    <location>
        <position position="27"/>
    </location>
    <ligand>
        <name>Zn(2+)</name>
        <dbReference type="ChEBI" id="CHEBI:29105"/>
        <label>2</label>
    </ligand>
</feature>
<feature type="binding site" evidence="1">
    <location>
        <position position="30"/>
    </location>
    <ligand>
        <name>Zn(2+)</name>
        <dbReference type="ChEBI" id="CHEBI:29105"/>
        <label>2</label>
    </ligand>
</feature>
<feature type="binding site" evidence="1">
    <location>
        <position position="33"/>
    </location>
    <ligand>
        <name>Zn(2+)</name>
        <dbReference type="ChEBI" id="CHEBI:29105"/>
        <label>1</label>
    </ligand>
</feature>
<feature type="binding site" evidence="1">
    <location>
        <position position="34"/>
    </location>
    <ligand>
        <name>Zn(2+)</name>
        <dbReference type="ChEBI" id="CHEBI:29105"/>
        <label>1</label>
    </ligand>
</feature>
<feature type="binding site" evidence="1">
    <location>
        <position position="37"/>
    </location>
    <ligand>
        <name>Zn(2+)</name>
        <dbReference type="ChEBI" id="CHEBI:29105"/>
        <label>1</label>
    </ligand>
</feature>
<feature type="site" description="Essential for Tat translocation through the endosomal membrane" evidence="1">
    <location>
        <position position="11"/>
    </location>
</feature>
<feature type="modified residue" description="N6-acetyllysine; by host PCAF" evidence="1">
    <location>
        <position position="28"/>
    </location>
</feature>
<feature type="modified residue" description="N6-acetyllysine; by host EP300 and GCN5L2" evidence="1">
    <location>
        <position position="50"/>
    </location>
</feature>
<feature type="modified residue" description="N6-acetyllysine; by host EP300 and GCN5L2" evidence="1">
    <location>
        <position position="51"/>
    </location>
</feature>
<feature type="modified residue" description="Asymmetric dimethylarginine; by host PRMT6" evidence="1">
    <location>
        <position position="52"/>
    </location>
</feature>
<feature type="modified residue" description="Asymmetric dimethylarginine; by host PRMT6" evidence="1">
    <location>
        <position position="53"/>
    </location>
</feature>
<feature type="cross-link" description="Glycyl lysine isopeptide (Lys-Gly) (interchain with G-Cter in ubiquitin)" evidence="1">
    <location>
        <position position="71"/>
    </location>
</feature>
<feature type="splice variant" id="VSP_022416" description="In isoform Short.">
    <location>
        <begin position="73"/>
        <end position="99"/>
    </location>
</feature>
<name>TAT_HV1MP</name>
<dbReference type="EMBL" id="AJ249236">
    <property type="status" value="NOT_ANNOTATED_CDS"/>
    <property type="molecule type" value="Genomic_RNA"/>
</dbReference>
<dbReference type="SMR" id="P0C1J9"/>
<dbReference type="Proteomes" id="UP000120463">
    <property type="component" value="Segment"/>
</dbReference>
<dbReference type="GO" id="GO:0005576">
    <property type="term" value="C:extracellular region"/>
    <property type="evidence" value="ECO:0007669"/>
    <property type="project" value="UniProtKB-SubCell"/>
</dbReference>
<dbReference type="GO" id="GO:0030430">
    <property type="term" value="C:host cell cytoplasm"/>
    <property type="evidence" value="ECO:0007669"/>
    <property type="project" value="UniProtKB-SubCell"/>
</dbReference>
<dbReference type="GO" id="GO:0044196">
    <property type="term" value="C:host cell nucleolus"/>
    <property type="evidence" value="ECO:0007669"/>
    <property type="project" value="UniProtKB-SubCell"/>
</dbReference>
<dbReference type="GO" id="GO:0042805">
    <property type="term" value="F:actinin binding"/>
    <property type="evidence" value="ECO:0007669"/>
    <property type="project" value="UniProtKB-UniRule"/>
</dbReference>
<dbReference type="GO" id="GO:0030332">
    <property type="term" value="F:cyclin binding"/>
    <property type="evidence" value="ECO:0007669"/>
    <property type="project" value="UniProtKB-UniRule"/>
</dbReference>
<dbReference type="GO" id="GO:0046872">
    <property type="term" value="F:metal ion binding"/>
    <property type="evidence" value="ECO:0007669"/>
    <property type="project" value="UniProtKB-UniRule"/>
</dbReference>
<dbReference type="GO" id="GO:0019904">
    <property type="term" value="F:protein domain specific binding"/>
    <property type="evidence" value="ECO:0007669"/>
    <property type="project" value="UniProtKB-UniRule"/>
</dbReference>
<dbReference type="GO" id="GO:0004865">
    <property type="term" value="F:protein serine/threonine phosphatase inhibitor activity"/>
    <property type="evidence" value="ECO:0007669"/>
    <property type="project" value="UniProtKB-KW"/>
</dbReference>
<dbReference type="GO" id="GO:0001070">
    <property type="term" value="F:RNA-binding transcription regulator activity"/>
    <property type="evidence" value="ECO:0007669"/>
    <property type="project" value="UniProtKB-UniRule"/>
</dbReference>
<dbReference type="GO" id="GO:1990970">
    <property type="term" value="F:trans-activation response element binding"/>
    <property type="evidence" value="ECO:0007669"/>
    <property type="project" value="UniProtKB-UniRule"/>
</dbReference>
<dbReference type="GO" id="GO:0006351">
    <property type="term" value="P:DNA-templated transcription"/>
    <property type="evidence" value="ECO:0007669"/>
    <property type="project" value="UniProtKB-UniRule"/>
</dbReference>
<dbReference type="GO" id="GO:0032968">
    <property type="term" value="P:positive regulation of transcription elongation by RNA polymerase II"/>
    <property type="evidence" value="ECO:0007669"/>
    <property type="project" value="UniProtKB-UniRule"/>
</dbReference>
<dbReference type="GO" id="GO:0050434">
    <property type="term" value="P:positive regulation of viral transcription"/>
    <property type="evidence" value="ECO:0007669"/>
    <property type="project" value="UniProtKB-UniRule"/>
</dbReference>
<dbReference type="GO" id="GO:0039525">
    <property type="term" value="P:symbiont-mediated perturbation of host chromatin organization"/>
    <property type="evidence" value="ECO:0007669"/>
    <property type="project" value="UniProtKB-UniRule"/>
</dbReference>
<dbReference type="GO" id="GO:0052170">
    <property type="term" value="P:symbiont-mediated suppression of host innate immune response"/>
    <property type="evidence" value="ECO:0007669"/>
    <property type="project" value="UniProtKB-KW"/>
</dbReference>
<dbReference type="GO" id="GO:0039606">
    <property type="term" value="P:symbiont-mediated suppression of host translation initiation"/>
    <property type="evidence" value="ECO:0007669"/>
    <property type="project" value="UniProtKB-KW"/>
</dbReference>
<dbReference type="GO" id="GO:0039502">
    <property type="term" value="P:symbiont-mediated suppression of host type I interferon-mediated signaling pathway"/>
    <property type="evidence" value="ECO:0007669"/>
    <property type="project" value="UniProtKB-UniRule"/>
</dbReference>
<dbReference type="Gene3D" id="4.10.20.10">
    <property type="entry name" value="Tat domain"/>
    <property type="match status" value="1"/>
</dbReference>
<dbReference type="HAMAP" id="MF_04079">
    <property type="entry name" value="HIV_TAT"/>
    <property type="match status" value="1"/>
</dbReference>
<dbReference type="InterPro" id="IPR001831">
    <property type="entry name" value="IV_Tat"/>
</dbReference>
<dbReference type="InterPro" id="IPR036963">
    <property type="entry name" value="Tat_dom_sf"/>
</dbReference>
<dbReference type="Pfam" id="PF00539">
    <property type="entry name" value="Tat"/>
    <property type="match status" value="1"/>
</dbReference>
<dbReference type="PRINTS" id="PR00055">
    <property type="entry name" value="HIVTATDOMAIN"/>
</dbReference>
<organismHost>
    <name type="scientific">Homo sapiens</name>
    <name type="common">Human</name>
    <dbReference type="NCBI Taxonomy" id="9606"/>
</organismHost>
<proteinExistence type="inferred from homology"/>
<gene>
    <name evidence="1" type="primary">tat</name>
</gene>
<reference key="1">
    <citation type="journal article" date="2000" name="AIDS Res. Hum. Retroviruses">
        <title>Near-full-length genome sequencing of divergent African HIV type 1 subtype F viruses leads to the identification of a new HIV type 1 subtype designated K.</title>
        <authorList>
            <person name="Triques K."/>
            <person name="Bourgeois A."/>
            <person name="Vidale N."/>
            <person name="Mpoudi-Ngole E."/>
            <person name="Mulanga-Kabeya C."/>
            <person name="Nzilambi N."/>
            <person name="Torimiro N."/>
            <person name="Saman E."/>
            <person name="Delaporte E."/>
            <person name="Peeters M."/>
        </authorList>
    </citation>
    <scope>NUCLEOTIDE SEQUENCE [GENOMIC RNA]</scope>
</reference>
<reference key="2">
    <citation type="journal article" date="2005" name="Microbes Infect.">
        <title>Decoding Tat: the biology of HIV Tat posttranslational modifications.</title>
        <authorList>
            <person name="Hetzer C."/>
            <person name="Dormeyer W."/>
            <person name="Schnolzer M."/>
            <person name="Ott M."/>
        </authorList>
    </citation>
    <scope>REVIEW</scope>
    <scope>ALTERNATIVE SPLICING</scope>
</reference>
<reference key="3">
    <citation type="journal article" date="2006" name="Front. Biosci.">
        <title>The multiple functions of HIV-1 Tat: proliferation versus apoptosis.</title>
        <authorList>
            <person name="Peruzzi F."/>
        </authorList>
    </citation>
    <scope>REVIEW</scope>
</reference>
<reference key="4">
    <citation type="journal article" date="2006" name="Microbes Infect.">
        <title>HIV tat and neurotoxicity.</title>
        <authorList>
            <person name="King J.E."/>
            <person name="Eugenin E.A."/>
            <person name="Buckner C.M."/>
            <person name="Berman J.W."/>
        </authorList>
    </citation>
    <scope>REVIEW</scope>
</reference>
<organism>
    <name type="scientific">Human immunodeficiency virus type 1 group M subtype F2 (isolate MP255)</name>
    <name type="common">HIV-1</name>
    <dbReference type="NCBI Taxonomy" id="388815"/>
    <lineage>
        <taxon>Viruses</taxon>
        <taxon>Riboviria</taxon>
        <taxon>Pararnavirae</taxon>
        <taxon>Artverviricota</taxon>
        <taxon>Revtraviricetes</taxon>
        <taxon>Ortervirales</taxon>
        <taxon>Retroviridae</taxon>
        <taxon>Orthoretrovirinae</taxon>
        <taxon>Lentivirus</taxon>
        <taxon>Human immunodeficiency virus type 1</taxon>
    </lineage>
</organism>
<keyword id="KW-0007">Acetylation</keyword>
<keyword id="KW-0010">Activator</keyword>
<keyword id="KW-0014">AIDS</keyword>
<keyword id="KW-0025">Alternative splicing</keyword>
<keyword id="KW-0053">Apoptosis</keyword>
<keyword id="KW-1035">Host cytoplasm</keyword>
<keyword id="KW-1048">Host nucleus</keyword>
<keyword id="KW-0945">Host-virus interaction</keyword>
<keyword id="KW-1090">Inhibition of host innate immune response by virus</keyword>
<keyword id="KW-1114">Inhibition of host interferon signaling pathway by virus</keyword>
<keyword id="KW-0922">Interferon antiviral system evasion</keyword>
<keyword id="KW-1017">Isopeptide bond</keyword>
<keyword id="KW-0479">Metal-binding</keyword>
<keyword id="KW-0488">Methylation</keyword>
<keyword id="KW-1122">Modulation of host chromatin by virus</keyword>
<keyword id="KW-1126">Modulation of host PP1 activity by virus</keyword>
<keyword id="KW-0597">Phosphoprotein</keyword>
<keyword id="KW-0694">RNA-binding</keyword>
<keyword id="KW-0964">Secreted</keyword>
<keyword id="KW-0804">Transcription</keyword>
<keyword id="KW-0805">Transcription regulation</keyword>
<keyword id="KW-0832">Ubl conjugation</keyword>
<keyword id="KW-0899">Viral immunoevasion</keyword>
<keyword id="KW-0862">Zinc</keyword>
<comment type="function">
    <text evidence="1">Transcriptional activator that increases RNA Pol II processivity, thereby increasing the level of full-length viral transcripts. Recognizes a hairpin structure at the 5'-LTR of the nascent viral mRNAs referred to as the transactivation responsive RNA element (TAR) and recruits the cyclin T1-CDK9 complex (P-TEFb complex) that will in turn hyperphosphorylate the RNA polymerase II to allow efficient elongation. The CDK9 component of P-TEFb and other Tat-activated kinases hyperphosphorylate the C-terminus of RNA Pol II that becomes stabilized and much more processive. Other factors such as HTATSF1/Tat-SF1, SUPT5H/SPT5, and HTATIP2 are also important for Tat's function. Besides its effect on RNA Pol II processivity, Tat induces chromatin remodeling of proviral genes by recruiting the histone acetyltransferases (HATs) CREBBP, EP300 and PCAF to the chromatin. This also contributes to the increase in proviral transcription rate, especially when the provirus integrates in transcriptionally silent region of the host genome. To ensure maximal activation of the LTR, Tat mediates nuclear translocation of NF-kappa-B by interacting with host RELA. Through its interaction with host TBP, Tat may also modulate transcription initiation. Tat can reactivate a latently infected cell by penetrating in it and transactivating its LTR promoter. In the cytoplasm, Tat is thought to act as a translational activator of HIV-1 mRNAs.</text>
</comment>
<comment type="function">
    <text evidence="1">Extracellular circulating Tat can be endocytosed by surrounding uninfected cells via the binding to several surface receptors such as CD26, CXCR4, heparan sulfate proteoglycans (HSPG) or LDLR. Neurons are rarely infected, but they internalize Tat via their LDLR. Through its interaction with nuclear HATs, Tat is potentially able to control the acetylation-dependent cellular gene expression. Modulates the expression of many cellular genes involved in cell survival, proliferation or in coding for cytokines or cytokine receptors. Tat plays a role in T-cell and neurons apoptosis. Tat induced neurotoxicity and apoptosis probably contribute to neuroAIDS. Circulating Tat also acts as a chemokine-like and/or growth factor-like molecule that binds to specific receptors on the surface of the cells, affecting many cellular pathways. In the vascular system, Tat binds to ITGAV/ITGB3 and ITGA5/ITGB1 integrins dimers at the surface of endothelial cells and competes with bFGF for heparin-binding sites, leading to an excess of soluble bFGF.</text>
</comment>
<comment type="subunit">
    <text evidence="1">Interacts with host CCNT1. Associates with the P-TEFb complex composed at least of Tat, P-TEFb (CDK9 and CCNT1), TAR RNA, RNA Pol II. Recruits the HATs CREBBP, TAF1/TFIID, EP300, PCAF and GCN5L2. Interacts with host KAT5/Tip60; this interaction targets the latter to degradation. Interacts with the host deacetylase SIRT1. Interacts with host capping enzyme RNGTT; this interaction stimulates RNGTT. Binds to host KDR, and to the host integrins ITGAV/ITGB3 and ITGA5/ITGB1. Interacts with host KPNB1/importin beta-1 without previous binding to KPNA1/importin alpha-1. Interacts with EIF2AK2. Interacts with host nucleosome assembly protein NAP1L1; this interaction may be required for the transport of Tat within the nucleus, since the two proteins interact at the nuclear rim. Interacts with host C1QBP/SF2P32; this interaction involves lysine-acetylated Tat. Interacts with the host chemokine receptors CCR2, CCR3 and CXCR4. Interacts with host DPP4/CD26; this interaction may trigger an anti-proliferative effect. Interacts with host LDLR. Interacts with the host extracellular matrix metalloproteinase MMP1. Interacts with host PRMT6; this interaction mediates Tat's methylation. Interacts with, and is ubiquitinated by MDM2/Hdm2. Interacts with host PSMC3 and HTATIP2. Interacts with STAB1; this interaction may overcome SATB1-mediated repression of IL2 and IL2RA (interleukin) in T cells by binding to the same domain than HDAC1. Interacts (when acetylated) with human CDK13, thereby increasing HIV-1 mRNA splicing and promoting the production of the doubly spliced HIV-1 protein Nef. Interacts with host TBP; this interaction modulates the activity of transcriptional pre-initiation complex. Interacts with host RELA. Interacts with host PLSCR1; this interaction negatively regulates Tat transactivation activity by altering its subcellular distribution.</text>
</comment>
<comment type="subcellular location">
    <subcellularLocation>
        <location evidence="1">Host nucleus</location>
        <location evidence="1">Host nucleolus</location>
    </subcellularLocation>
    <subcellularLocation>
        <location evidence="1">Host cytoplasm</location>
    </subcellularLocation>
    <subcellularLocation>
        <location evidence="1">Secreted</location>
    </subcellularLocation>
    <text evidence="1">Probably localizes to both nuclear and nucleolar compartments. Nuclear localization is mediated through the interaction of the nuclear localization signal with importin KPNB1. Secretion occurs through a Golgi-independent pathway. Tat is released from infected cells to the extracellular space where it remains associated to the cell membrane, or is secreted into the cerebrospinal fluid and sera. Extracellular Tat can be endocytosed by surrounding uninfected cells via binding to several receptors depending on the cell type.</text>
</comment>
<comment type="alternative products">
    <event type="alternative splicing"/>
    <isoform>
        <id>P0C1J9-1</id>
        <name>Long</name>
        <sequence type="displayed"/>
    </isoform>
    <isoform>
        <id>P0C1J9-2</id>
        <name>Short</name>
        <sequence type="described" ref="VSP_022416"/>
    </isoform>
</comment>
<comment type="domain">
    <text evidence="1">The cell attachment site mediates the interaction with ITGAV/ITGB3 and ITGA5/ITGB1 integrins, leading to vascular cell migration and invasion. This interaction also provides endothelial cells with the adhesion signal they require to grow in response to mitogens.</text>
</comment>
<comment type="domain">
    <text evidence="1">The Cys-rich region may bind 2 zinc ions. This region is involved in binding to KAT5.</text>
</comment>
<comment type="domain">
    <text evidence="1">The transactivation domain mediates the interaction with CCNT1, GCN5L2, and MDM2.</text>
</comment>
<comment type="domain">
    <text evidence="1">The Arg-rich RNA-binding region binds the TAR RNA. This region also mediates the nuclear localization through direct binding to KPNB1 and is involved in Tat's transfer across cell membranes (protein transduction). The same region is required for the interaction with EP300, PCAF, EIF2AK2 and KDR.</text>
</comment>
<comment type="PTM">
    <text evidence="1">Asymmetrical arginine methylation by host PRMT6 seems to diminish the transactivation capacity of Tat and affects the interaction with host CCNT1.</text>
</comment>
<comment type="PTM">
    <text evidence="1">Acetylation by EP300, CREBBP, GCN5L2/GCN5 and PCAF regulates the transactivation activity of Tat. EP300-mediated acetylation of Lys-50 promotes dissociation of Tat from the TAR RNA through the competitive binding to PCAF's bromodomain. In addition, the non-acetylated Tat's N-terminus can also interact with PCAF. PCAF-mediated acetylation of Lys-28 enhances Tat's binding to CCNT1. Lys-50 is deacetylated by SIRT1.</text>
</comment>
<comment type="PTM">
    <text evidence="1">Polyubiquitination by host MDM2 does not target Tat to degradation, but activates its transactivation function and fosters interaction with CCNT1 and TAR RNA.</text>
</comment>
<comment type="PTM">
    <text evidence="1">Phosphorylated by EIF2AK2 on serine and threonine residues adjacent to the basic region important for TAR RNA binding and function. Phosphorylation of Tat by EIF2AK2 is dependent on the prior activation of EIF2AK2 by dsRNA.</text>
</comment>
<comment type="miscellaneous">
    <text evidence="1">HIV-1 lineages are divided in three main groups, M (for Major), O (for Outlier), and N (for New, or Non-M, Non-O). The vast majority of strains found worldwide belong to the group M. Group O seems to be endemic to and largely confined to Cameroon and neighboring countries in West Central Africa, where these viruses represent a small minority of HIV-1 strains. The group N is represented by a limited number of isolates from Cameroonian persons. The group M is further subdivided in 9 clades or subtypes (A to D, F to H, J and K).</text>
</comment>
<comment type="miscellaneous">
    <molecule>Isoform Short</molecule>
    <text evidence="3">Expressed in the late stage of the infection cycle, when unspliced viral RNAs are exported to the cytoplasm by the viral Rev protein.</text>
</comment>
<comment type="similarity">
    <text evidence="1">Belongs to the lentiviruses Tat family.</text>
</comment>
<evidence type="ECO:0000255" key="1">
    <source>
        <dbReference type="HAMAP-Rule" id="MF_04079"/>
    </source>
</evidence>
<evidence type="ECO:0000256" key="2">
    <source>
        <dbReference type="SAM" id="MobiDB-lite"/>
    </source>
</evidence>
<evidence type="ECO:0000305" key="3"/>
<sequence length="99" mass="11308">MEVVDPKIDPWNHPGSQPETPCNNCYCKKCCFHCPLCFMKKGLGISYGRKKRRQRRRTPQGSKIHQDPVPKQPLSQTRGDPTGPEESKKKVESQTETDP</sequence>
<protein>
    <recommendedName>
        <fullName evidence="1">Protein Tat</fullName>
    </recommendedName>
    <alternativeName>
        <fullName evidence="1">Transactivating regulatory protein</fullName>
    </alternativeName>
</protein>
<accession>P0C1J9</accession>